<gene>
    <name evidence="1" type="primary">lipB</name>
    <name type="ordered locus">XAC0667</name>
</gene>
<feature type="chain" id="PRO_0000062896" description="Octanoyltransferase">
    <location>
        <begin position="1"/>
        <end position="232"/>
    </location>
</feature>
<feature type="domain" description="BPL/LPL catalytic" evidence="2">
    <location>
        <begin position="44"/>
        <end position="219"/>
    </location>
</feature>
<feature type="active site" description="Acyl-thioester intermediate" evidence="1">
    <location>
        <position position="181"/>
    </location>
</feature>
<feature type="binding site" evidence="1">
    <location>
        <begin position="83"/>
        <end position="90"/>
    </location>
    <ligand>
        <name>substrate</name>
    </ligand>
</feature>
<feature type="binding site" evidence="1">
    <location>
        <begin position="150"/>
        <end position="152"/>
    </location>
    <ligand>
        <name>substrate</name>
    </ligand>
</feature>
<feature type="binding site" evidence="1">
    <location>
        <begin position="163"/>
        <end position="165"/>
    </location>
    <ligand>
        <name>substrate</name>
    </ligand>
</feature>
<feature type="site" description="Lowers pKa of active site Cys" evidence="1">
    <location>
        <position position="147"/>
    </location>
</feature>
<accession>Q8PPL9</accession>
<dbReference type="EC" id="2.3.1.181" evidence="1"/>
<dbReference type="EMBL" id="AE008923">
    <property type="protein sequence ID" value="AAM35556.1"/>
    <property type="molecule type" value="Genomic_DNA"/>
</dbReference>
<dbReference type="RefSeq" id="WP_011050466.1">
    <property type="nucleotide sequence ID" value="NC_003919.1"/>
</dbReference>
<dbReference type="SMR" id="Q8PPL9"/>
<dbReference type="GeneID" id="66909865"/>
<dbReference type="KEGG" id="xac:XAC0667"/>
<dbReference type="eggNOG" id="COG0321">
    <property type="taxonomic scope" value="Bacteria"/>
</dbReference>
<dbReference type="HOGENOM" id="CLU_035168_3_1_6"/>
<dbReference type="UniPathway" id="UPA00538">
    <property type="reaction ID" value="UER00592"/>
</dbReference>
<dbReference type="Proteomes" id="UP000000576">
    <property type="component" value="Chromosome"/>
</dbReference>
<dbReference type="GO" id="GO:0005737">
    <property type="term" value="C:cytoplasm"/>
    <property type="evidence" value="ECO:0007669"/>
    <property type="project" value="UniProtKB-SubCell"/>
</dbReference>
<dbReference type="GO" id="GO:0033819">
    <property type="term" value="F:lipoyl(octanoyl) transferase activity"/>
    <property type="evidence" value="ECO:0007669"/>
    <property type="project" value="UniProtKB-EC"/>
</dbReference>
<dbReference type="GO" id="GO:0036211">
    <property type="term" value="P:protein modification process"/>
    <property type="evidence" value="ECO:0007669"/>
    <property type="project" value="InterPro"/>
</dbReference>
<dbReference type="CDD" id="cd16444">
    <property type="entry name" value="LipB"/>
    <property type="match status" value="1"/>
</dbReference>
<dbReference type="FunFam" id="3.30.930.10:FF:000020">
    <property type="entry name" value="Octanoyltransferase"/>
    <property type="match status" value="1"/>
</dbReference>
<dbReference type="Gene3D" id="3.30.930.10">
    <property type="entry name" value="Bira Bifunctional Protein, Domain 2"/>
    <property type="match status" value="1"/>
</dbReference>
<dbReference type="HAMAP" id="MF_00013">
    <property type="entry name" value="LipB"/>
    <property type="match status" value="1"/>
</dbReference>
<dbReference type="InterPro" id="IPR045864">
    <property type="entry name" value="aa-tRNA-synth_II/BPL/LPL"/>
</dbReference>
<dbReference type="InterPro" id="IPR004143">
    <property type="entry name" value="BPL_LPL_catalytic"/>
</dbReference>
<dbReference type="InterPro" id="IPR000544">
    <property type="entry name" value="Octanoyltransferase"/>
</dbReference>
<dbReference type="InterPro" id="IPR020605">
    <property type="entry name" value="Octanoyltransferase_CS"/>
</dbReference>
<dbReference type="NCBIfam" id="TIGR00214">
    <property type="entry name" value="lipB"/>
    <property type="match status" value="1"/>
</dbReference>
<dbReference type="NCBIfam" id="NF010922">
    <property type="entry name" value="PRK14342.1"/>
    <property type="match status" value="1"/>
</dbReference>
<dbReference type="NCBIfam" id="NF010925">
    <property type="entry name" value="PRK14345.1"/>
    <property type="match status" value="1"/>
</dbReference>
<dbReference type="PANTHER" id="PTHR10993:SF7">
    <property type="entry name" value="LIPOYLTRANSFERASE 2, MITOCHONDRIAL-RELATED"/>
    <property type="match status" value="1"/>
</dbReference>
<dbReference type="PANTHER" id="PTHR10993">
    <property type="entry name" value="OCTANOYLTRANSFERASE"/>
    <property type="match status" value="1"/>
</dbReference>
<dbReference type="Pfam" id="PF21948">
    <property type="entry name" value="LplA-B_cat"/>
    <property type="match status" value="1"/>
</dbReference>
<dbReference type="PIRSF" id="PIRSF016262">
    <property type="entry name" value="LPLase"/>
    <property type="match status" value="1"/>
</dbReference>
<dbReference type="SUPFAM" id="SSF55681">
    <property type="entry name" value="Class II aaRS and biotin synthetases"/>
    <property type="match status" value="1"/>
</dbReference>
<dbReference type="PROSITE" id="PS51733">
    <property type="entry name" value="BPL_LPL_CATALYTIC"/>
    <property type="match status" value="1"/>
</dbReference>
<dbReference type="PROSITE" id="PS01313">
    <property type="entry name" value="LIPB"/>
    <property type="match status" value="1"/>
</dbReference>
<keyword id="KW-0012">Acyltransferase</keyword>
<keyword id="KW-0963">Cytoplasm</keyword>
<keyword id="KW-0808">Transferase</keyword>
<organism>
    <name type="scientific">Xanthomonas axonopodis pv. citri (strain 306)</name>
    <dbReference type="NCBI Taxonomy" id="190486"/>
    <lineage>
        <taxon>Bacteria</taxon>
        <taxon>Pseudomonadati</taxon>
        <taxon>Pseudomonadota</taxon>
        <taxon>Gammaproteobacteria</taxon>
        <taxon>Lysobacterales</taxon>
        <taxon>Lysobacteraceae</taxon>
        <taxon>Xanthomonas</taxon>
    </lineage>
</organism>
<name>LIPB_XANAC</name>
<protein>
    <recommendedName>
        <fullName evidence="1">Octanoyltransferase</fullName>
        <ecNumber evidence="1">2.3.1.181</ecNumber>
    </recommendedName>
    <alternativeName>
        <fullName evidence="1">Lipoate-protein ligase B</fullName>
    </alternativeName>
    <alternativeName>
        <fullName evidence="1">Lipoyl/octanoyl transferase</fullName>
    </alternativeName>
    <alternativeName>
        <fullName evidence="1">Octanoyl-[acyl-carrier-protein]-protein N-octanoyltransferase</fullName>
    </alternativeName>
</protein>
<reference key="1">
    <citation type="journal article" date="2002" name="Nature">
        <title>Comparison of the genomes of two Xanthomonas pathogens with differing host specificities.</title>
        <authorList>
            <person name="da Silva A.C.R."/>
            <person name="Ferro J.A."/>
            <person name="Reinach F.C."/>
            <person name="Farah C.S."/>
            <person name="Furlan L.R."/>
            <person name="Quaggio R.B."/>
            <person name="Monteiro-Vitorello C.B."/>
            <person name="Van Sluys M.A."/>
            <person name="Almeida N.F. Jr."/>
            <person name="Alves L.M.C."/>
            <person name="do Amaral A.M."/>
            <person name="Bertolini M.C."/>
            <person name="Camargo L.E.A."/>
            <person name="Camarotte G."/>
            <person name="Cannavan F."/>
            <person name="Cardozo J."/>
            <person name="Chambergo F."/>
            <person name="Ciapina L.P."/>
            <person name="Cicarelli R.M.B."/>
            <person name="Coutinho L.L."/>
            <person name="Cursino-Santos J.R."/>
            <person name="El-Dorry H."/>
            <person name="Faria J.B."/>
            <person name="Ferreira A.J.S."/>
            <person name="Ferreira R.C.C."/>
            <person name="Ferro M.I.T."/>
            <person name="Formighieri E.F."/>
            <person name="Franco M.C."/>
            <person name="Greggio C.C."/>
            <person name="Gruber A."/>
            <person name="Katsuyama A.M."/>
            <person name="Kishi L.T."/>
            <person name="Leite R.P."/>
            <person name="Lemos E.G.M."/>
            <person name="Lemos M.V.F."/>
            <person name="Locali E.C."/>
            <person name="Machado M.A."/>
            <person name="Madeira A.M.B.N."/>
            <person name="Martinez-Rossi N.M."/>
            <person name="Martins E.C."/>
            <person name="Meidanis J."/>
            <person name="Menck C.F.M."/>
            <person name="Miyaki C.Y."/>
            <person name="Moon D.H."/>
            <person name="Moreira L.M."/>
            <person name="Novo M.T.M."/>
            <person name="Okura V.K."/>
            <person name="Oliveira M.C."/>
            <person name="Oliveira V.R."/>
            <person name="Pereira H.A."/>
            <person name="Rossi A."/>
            <person name="Sena J.A.D."/>
            <person name="Silva C."/>
            <person name="de Souza R.F."/>
            <person name="Spinola L.A.F."/>
            <person name="Takita M.A."/>
            <person name="Tamura R.E."/>
            <person name="Teixeira E.C."/>
            <person name="Tezza R.I.D."/>
            <person name="Trindade dos Santos M."/>
            <person name="Truffi D."/>
            <person name="Tsai S.M."/>
            <person name="White F.F."/>
            <person name="Setubal J.C."/>
            <person name="Kitajima J.P."/>
        </authorList>
    </citation>
    <scope>NUCLEOTIDE SEQUENCE [LARGE SCALE GENOMIC DNA]</scope>
    <source>
        <strain>306</strain>
    </source>
</reference>
<sequence length="232" mass="25164">MDAVAAEPVSSSMAGLPAQLRDLGQQDYAPVWRAMQRFTDAREEYTADEIWVVEHAPVFTLGQAGKPEHVLAPGEIPVLQVDRGGQVTYHGPGQLVVYPLLDLRRLKIGVRDYVCKIEQALIDTLDEWNIVAERRDGAPGVYVGGAKIAALGIRVRRGCTFHGLSFNVAMDLQPFHRINPCGYQGLQVTSVLDLGGPSGMDAVKAVLLDQLARQFGLVLQPTSALPDLSLPA</sequence>
<evidence type="ECO:0000255" key="1">
    <source>
        <dbReference type="HAMAP-Rule" id="MF_00013"/>
    </source>
</evidence>
<evidence type="ECO:0000255" key="2">
    <source>
        <dbReference type="PROSITE-ProRule" id="PRU01067"/>
    </source>
</evidence>
<proteinExistence type="inferred from homology"/>
<comment type="function">
    <text evidence="1">Catalyzes the transfer of endogenously produced octanoic acid from octanoyl-acyl-carrier-protein onto the lipoyl domains of lipoate-dependent enzymes. Lipoyl-ACP can also act as a substrate although octanoyl-ACP is likely to be the physiological substrate.</text>
</comment>
<comment type="catalytic activity">
    <reaction evidence="1">
        <text>octanoyl-[ACP] + L-lysyl-[protein] = N(6)-octanoyl-L-lysyl-[protein] + holo-[ACP] + H(+)</text>
        <dbReference type="Rhea" id="RHEA:17665"/>
        <dbReference type="Rhea" id="RHEA-COMP:9636"/>
        <dbReference type="Rhea" id="RHEA-COMP:9685"/>
        <dbReference type="Rhea" id="RHEA-COMP:9752"/>
        <dbReference type="Rhea" id="RHEA-COMP:9928"/>
        <dbReference type="ChEBI" id="CHEBI:15378"/>
        <dbReference type="ChEBI" id="CHEBI:29969"/>
        <dbReference type="ChEBI" id="CHEBI:64479"/>
        <dbReference type="ChEBI" id="CHEBI:78463"/>
        <dbReference type="ChEBI" id="CHEBI:78809"/>
        <dbReference type="EC" id="2.3.1.181"/>
    </reaction>
</comment>
<comment type="pathway">
    <text evidence="1">Protein modification; protein lipoylation via endogenous pathway; protein N(6)-(lipoyl)lysine from octanoyl-[acyl-carrier-protein]: step 1/2.</text>
</comment>
<comment type="subcellular location">
    <subcellularLocation>
        <location evidence="1">Cytoplasm</location>
    </subcellularLocation>
</comment>
<comment type="miscellaneous">
    <text evidence="1">In the reaction, the free carboxyl group of octanoic acid is attached via an amide linkage to the epsilon-amino group of a specific lysine residue of lipoyl domains of lipoate-dependent enzymes.</text>
</comment>
<comment type="similarity">
    <text evidence="1">Belongs to the LipB family.</text>
</comment>